<dbReference type="EC" id="4.2.3.5" evidence="1"/>
<dbReference type="EMBL" id="AE004439">
    <property type="protein sequence ID" value="AAK02443.1"/>
    <property type="molecule type" value="Genomic_DNA"/>
</dbReference>
<dbReference type="RefSeq" id="WP_005721535.1">
    <property type="nucleotide sequence ID" value="NC_002663.1"/>
</dbReference>
<dbReference type="SMR" id="P57840"/>
<dbReference type="STRING" id="272843.PM0359"/>
<dbReference type="EnsemblBacteria" id="AAK02443">
    <property type="protein sequence ID" value="AAK02443"/>
    <property type="gene ID" value="PM0359"/>
</dbReference>
<dbReference type="KEGG" id="pmu:PM0359"/>
<dbReference type="PATRIC" id="fig|272843.6.peg.372"/>
<dbReference type="HOGENOM" id="CLU_034547_0_2_6"/>
<dbReference type="OrthoDB" id="9771806at2"/>
<dbReference type="UniPathway" id="UPA00053">
    <property type="reaction ID" value="UER00090"/>
</dbReference>
<dbReference type="Proteomes" id="UP000000809">
    <property type="component" value="Chromosome"/>
</dbReference>
<dbReference type="GO" id="GO:0005829">
    <property type="term" value="C:cytosol"/>
    <property type="evidence" value="ECO:0007669"/>
    <property type="project" value="TreeGrafter"/>
</dbReference>
<dbReference type="GO" id="GO:0004107">
    <property type="term" value="F:chorismate synthase activity"/>
    <property type="evidence" value="ECO:0007669"/>
    <property type="project" value="UniProtKB-UniRule"/>
</dbReference>
<dbReference type="GO" id="GO:0010181">
    <property type="term" value="F:FMN binding"/>
    <property type="evidence" value="ECO:0007669"/>
    <property type="project" value="TreeGrafter"/>
</dbReference>
<dbReference type="GO" id="GO:0008652">
    <property type="term" value="P:amino acid biosynthetic process"/>
    <property type="evidence" value="ECO:0007669"/>
    <property type="project" value="UniProtKB-KW"/>
</dbReference>
<dbReference type="GO" id="GO:0009073">
    <property type="term" value="P:aromatic amino acid family biosynthetic process"/>
    <property type="evidence" value="ECO:0007669"/>
    <property type="project" value="UniProtKB-KW"/>
</dbReference>
<dbReference type="GO" id="GO:0009423">
    <property type="term" value="P:chorismate biosynthetic process"/>
    <property type="evidence" value="ECO:0007669"/>
    <property type="project" value="UniProtKB-UniRule"/>
</dbReference>
<dbReference type="CDD" id="cd07304">
    <property type="entry name" value="Chorismate_synthase"/>
    <property type="match status" value="1"/>
</dbReference>
<dbReference type="FunFam" id="3.60.150.10:FF:000001">
    <property type="entry name" value="Chorismate synthase"/>
    <property type="match status" value="1"/>
</dbReference>
<dbReference type="Gene3D" id="3.60.150.10">
    <property type="entry name" value="Chorismate synthase AroC"/>
    <property type="match status" value="1"/>
</dbReference>
<dbReference type="HAMAP" id="MF_00300">
    <property type="entry name" value="Chorismate_synth"/>
    <property type="match status" value="1"/>
</dbReference>
<dbReference type="InterPro" id="IPR000453">
    <property type="entry name" value="Chorismate_synth"/>
</dbReference>
<dbReference type="InterPro" id="IPR035904">
    <property type="entry name" value="Chorismate_synth_AroC_sf"/>
</dbReference>
<dbReference type="InterPro" id="IPR020541">
    <property type="entry name" value="Chorismate_synthase_CS"/>
</dbReference>
<dbReference type="NCBIfam" id="TIGR00033">
    <property type="entry name" value="aroC"/>
    <property type="match status" value="1"/>
</dbReference>
<dbReference type="NCBIfam" id="NF003793">
    <property type="entry name" value="PRK05382.1"/>
    <property type="match status" value="1"/>
</dbReference>
<dbReference type="PANTHER" id="PTHR21085">
    <property type="entry name" value="CHORISMATE SYNTHASE"/>
    <property type="match status" value="1"/>
</dbReference>
<dbReference type="PANTHER" id="PTHR21085:SF0">
    <property type="entry name" value="CHORISMATE SYNTHASE"/>
    <property type="match status" value="1"/>
</dbReference>
<dbReference type="Pfam" id="PF01264">
    <property type="entry name" value="Chorismate_synt"/>
    <property type="match status" value="1"/>
</dbReference>
<dbReference type="PIRSF" id="PIRSF001456">
    <property type="entry name" value="Chorismate_synth"/>
    <property type="match status" value="1"/>
</dbReference>
<dbReference type="SUPFAM" id="SSF103263">
    <property type="entry name" value="Chorismate synthase, AroC"/>
    <property type="match status" value="1"/>
</dbReference>
<dbReference type="PROSITE" id="PS00787">
    <property type="entry name" value="CHORISMATE_SYNTHASE_1"/>
    <property type="match status" value="1"/>
</dbReference>
<dbReference type="PROSITE" id="PS00788">
    <property type="entry name" value="CHORISMATE_SYNTHASE_2"/>
    <property type="match status" value="1"/>
</dbReference>
<dbReference type="PROSITE" id="PS00789">
    <property type="entry name" value="CHORISMATE_SYNTHASE_3"/>
    <property type="match status" value="1"/>
</dbReference>
<gene>
    <name evidence="1" type="primary">aroC</name>
    <name type="ordered locus">PM0359</name>
</gene>
<organism>
    <name type="scientific">Pasteurella multocida (strain Pm70)</name>
    <dbReference type="NCBI Taxonomy" id="272843"/>
    <lineage>
        <taxon>Bacteria</taxon>
        <taxon>Pseudomonadati</taxon>
        <taxon>Pseudomonadota</taxon>
        <taxon>Gammaproteobacteria</taxon>
        <taxon>Pasteurellales</taxon>
        <taxon>Pasteurellaceae</taxon>
        <taxon>Pasteurella</taxon>
    </lineage>
</organism>
<keyword id="KW-0028">Amino-acid biosynthesis</keyword>
<keyword id="KW-0057">Aromatic amino acid biosynthesis</keyword>
<keyword id="KW-0274">FAD</keyword>
<keyword id="KW-0285">Flavoprotein</keyword>
<keyword id="KW-0288">FMN</keyword>
<keyword id="KW-0456">Lyase</keyword>
<keyword id="KW-0521">NADP</keyword>
<keyword id="KW-1185">Reference proteome</keyword>
<sequence>MAGNTIGQLFQVTTFGESHGIALGCIVDGVPPGLSLSEADIQPDLDRRKPGTSRYTTPRREDDEVQILSGVFEGKTTGTSIGMIIKNADQRSQDYGDIKDRFRPGHADFTYQQKYGIRDYRGGGRSSARETAMRVAAGAIAKKYLREHFGVEVRGFLAQIGDVAIAPQVIEQIDWQQVNSNPFFCPDPSAVEKFDELIRQLKKEGDSIGAKLTVVAENVPVGLGEPVFDRLDADLAHALMGINAVKAVEIGDGFAVVNQRGSAHRDEMTPEGFLSNHAGGILGGISSGQPIVATIALKPTSSITIPGRSVNLANEPVEVITKGRHDPCVGIRAVPIAEAMVAIVLLDHLLRHKAQNR</sequence>
<name>AROC_PASMU</name>
<evidence type="ECO:0000255" key="1">
    <source>
        <dbReference type="HAMAP-Rule" id="MF_00300"/>
    </source>
</evidence>
<protein>
    <recommendedName>
        <fullName evidence="1">Chorismate synthase</fullName>
        <shortName evidence="1">CS</shortName>
        <ecNumber evidence="1">4.2.3.5</ecNumber>
    </recommendedName>
    <alternativeName>
        <fullName evidence="1">5-enolpyruvylshikimate-3-phosphate phospholyase</fullName>
    </alternativeName>
</protein>
<accession>P57840</accession>
<comment type="function">
    <text evidence="1">Catalyzes the anti-1,4-elimination of the C-3 phosphate and the C-6 proR hydrogen from 5-enolpyruvylshikimate-3-phosphate (EPSP) to yield chorismate, which is the branch point compound that serves as the starting substrate for the three terminal pathways of aromatic amino acid biosynthesis. This reaction introduces a second double bond into the aromatic ring system.</text>
</comment>
<comment type="catalytic activity">
    <reaction evidence="1">
        <text>5-O-(1-carboxyvinyl)-3-phosphoshikimate = chorismate + phosphate</text>
        <dbReference type="Rhea" id="RHEA:21020"/>
        <dbReference type="ChEBI" id="CHEBI:29748"/>
        <dbReference type="ChEBI" id="CHEBI:43474"/>
        <dbReference type="ChEBI" id="CHEBI:57701"/>
        <dbReference type="EC" id="4.2.3.5"/>
    </reaction>
</comment>
<comment type="cofactor">
    <cofactor evidence="1">
        <name>FMNH2</name>
        <dbReference type="ChEBI" id="CHEBI:57618"/>
    </cofactor>
    <text evidence="1">Reduced FMN (FMNH(2)).</text>
</comment>
<comment type="pathway">
    <text evidence="1">Metabolic intermediate biosynthesis; chorismate biosynthesis; chorismate from D-erythrose 4-phosphate and phosphoenolpyruvate: step 7/7.</text>
</comment>
<comment type="subunit">
    <text evidence="1">Homotetramer.</text>
</comment>
<comment type="similarity">
    <text evidence="1">Belongs to the chorismate synthase family.</text>
</comment>
<proteinExistence type="inferred from homology"/>
<reference key="1">
    <citation type="journal article" date="2001" name="Proc. Natl. Acad. Sci. U.S.A.">
        <title>Complete genomic sequence of Pasteurella multocida Pm70.</title>
        <authorList>
            <person name="May B.J."/>
            <person name="Zhang Q."/>
            <person name="Li L.L."/>
            <person name="Paustian M.L."/>
            <person name="Whittam T.S."/>
            <person name="Kapur V."/>
        </authorList>
    </citation>
    <scope>NUCLEOTIDE SEQUENCE [LARGE SCALE GENOMIC DNA]</scope>
    <source>
        <strain>Pm70</strain>
    </source>
</reference>
<feature type="chain" id="PRO_0000140623" description="Chorismate synthase">
    <location>
        <begin position="1"/>
        <end position="357"/>
    </location>
</feature>
<feature type="binding site" evidence="1">
    <location>
        <position position="48"/>
    </location>
    <ligand>
        <name>NADP(+)</name>
        <dbReference type="ChEBI" id="CHEBI:58349"/>
    </ligand>
</feature>
<feature type="binding site" evidence="1">
    <location>
        <position position="54"/>
    </location>
    <ligand>
        <name>NADP(+)</name>
        <dbReference type="ChEBI" id="CHEBI:58349"/>
    </ligand>
</feature>
<feature type="binding site" evidence="1">
    <location>
        <begin position="125"/>
        <end position="127"/>
    </location>
    <ligand>
        <name>FMN</name>
        <dbReference type="ChEBI" id="CHEBI:58210"/>
    </ligand>
</feature>
<feature type="binding site" evidence="1">
    <location>
        <begin position="243"/>
        <end position="244"/>
    </location>
    <ligand>
        <name>FMN</name>
        <dbReference type="ChEBI" id="CHEBI:58210"/>
    </ligand>
</feature>
<feature type="binding site" evidence="1">
    <location>
        <position position="283"/>
    </location>
    <ligand>
        <name>FMN</name>
        <dbReference type="ChEBI" id="CHEBI:58210"/>
    </ligand>
</feature>
<feature type="binding site" evidence="1">
    <location>
        <begin position="298"/>
        <end position="302"/>
    </location>
    <ligand>
        <name>FMN</name>
        <dbReference type="ChEBI" id="CHEBI:58210"/>
    </ligand>
</feature>
<feature type="binding site" evidence="1">
    <location>
        <position position="324"/>
    </location>
    <ligand>
        <name>FMN</name>
        <dbReference type="ChEBI" id="CHEBI:58210"/>
    </ligand>
</feature>